<organism>
    <name type="scientific">Streptococcus suis (strain 05ZYH33)</name>
    <dbReference type="NCBI Taxonomy" id="391295"/>
    <lineage>
        <taxon>Bacteria</taxon>
        <taxon>Bacillati</taxon>
        <taxon>Bacillota</taxon>
        <taxon>Bacilli</taxon>
        <taxon>Lactobacillales</taxon>
        <taxon>Streptococcaceae</taxon>
        <taxon>Streptococcus</taxon>
    </lineage>
</organism>
<dbReference type="EMBL" id="CP000407">
    <property type="protein sequence ID" value="ABP89048.1"/>
    <property type="molecule type" value="Genomic_DNA"/>
</dbReference>
<dbReference type="SMR" id="A4VSF9"/>
<dbReference type="STRING" id="391295.SSU05_0076"/>
<dbReference type="KEGG" id="ssu:SSU05_0076"/>
<dbReference type="eggNOG" id="COG0091">
    <property type="taxonomic scope" value="Bacteria"/>
</dbReference>
<dbReference type="HOGENOM" id="CLU_083987_3_3_9"/>
<dbReference type="GO" id="GO:0022625">
    <property type="term" value="C:cytosolic large ribosomal subunit"/>
    <property type="evidence" value="ECO:0007669"/>
    <property type="project" value="TreeGrafter"/>
</dbReference>
<dbReference type="GO" id="GO:0019843">
    <property type="term" value="F:rRNA binding"/>
    <property type="evidence" value="ECO:0007669"/>
    <property type="project" value="UniProtKB-UniRule"/>
</dbReference>
<dbReference type="GO" id="GO:0003735">
    <property type="term" value="F:structural constituent of ribosome"/>
    <property type="evidence" value="ECO:0007669"/>
    <property type="project" value="InterPro"/>
</dbReference>
<dbReference type="GO" id="GO:0006412">
    <property type="term" value="P:translation"/>
    <property type="evidence" value="ECO:0007669"/>
    <property type="project" value="UniProtKB-UniRule"/>
</dbReference>
<dbReference type="CDD" id="cd00336">
    <property type="entry name" value="Ribosomal_L22"/>
    <property type="match status" value="1"/>
</dbReference>
<dbReference type="FunFam" id="3.90.470.10:FF:000001">
    <property type="entry name" value="50S ribosomal protein L22"/>
    <property type="match status" value="1"/>
</dbReference>
<dbReference type="Gene3D" id="3.90.470.10">
    <property type="entry name" value="Ribosomal protein L22/L17"/>
    <property type="match status" value="1"/>
</dbReference>
<dbReference type="HAMAP" id="MF_01331_B">
    <property type="entry name" value="Ribosomal_uL22_B"/>
    <property type="match status" value="1"/>
</dbReference>
<dbReference type="InterPro" id="IPR001063">
    <property type="entry name" value="Ribosomal_uL22"/>
</dbReference>
<dbReference type="InterPro" id="IPR005727">
    <property type="entry name" value="Ribosomal_uL22_bac/chlpt-type"/>
</dbReference>
<dbReference type="InterPro" id="IPR047867">
    <property type="entry name" value="Ribosomal_uL22_bac/org-type"/>
</dbReference>
<dbReference type="InterPro" id="IPR018260">
    <property type="entry name" value="Ribosomal_uL22_CS"/>
</dbReference>
<dbReference type="InterPro" id="IPR036394">
    <property type="entry name" value="Ribosomal_uL22_sf"/>
</dbReference>
<dbReference type="NCBIfam" id="TIGR01044">
    <property type="entry name" value="rplV_bact"/>
    <property type="match status" value="1"/>
</dbReference>
<dbReference type="PANTHER" id="PTHR13501">
    <property type="entry name" value="CHLOROPLAST 50S RIBOSOMAL PROTEIN L22-RELATED"/>
    <property type="match status" value="1"/>
</dbReference>
<dbReference type="PANTHER" id="PTHR13501:SF8">
    <property type="entry name" value="LARGE RIBOSOMAL SUBUNIT PROTEIN UL22M"/>
    <property type="match status" value="1"/>
</dbReference>
<dbReference type="Pfam" id="PF00237">
    <property type="entry name" value="Ribosomal_L22"/>
    <property type="match status" value="1"/>
</dbReference>
<dbReference type="SUPFAM" id="SSF54843">
    <property type="entry name" value="Ribosomal protein L22"/>
    <property type="match status" value="1"/>
</dbReference>
<dbReference type="PROSITE" id="PS00464">
    <property type="entry name" value="RIBOSOMAL_L22"/>
    <property type="match status" value="1"/>
</dbReference>
<name>RL22_STRSY</name>
<protein>
    <recommendedName>
        <fullName evidence="1">Large ribosomal subunit protein uL22</fullName>
    </recommendedName>
    <alternativeName>
        <fullName evidence="2">50S ribosomal protein L22</fullName>
    </alternativeName>
</protein>
<reference key="1">
    <citation type="journal article" date="2007" name="PLoS ONE">
        <title>A glimpse of streptococcal toxic shock syndrome from comparative genomics of S. suis 2 Chinese isolates.</title>
        <authorList>
            <person name="Chen C."/>
            <person name="Tang J."/>
            <person name="Dong W."/>
            <person name="Wang C."/>
            <person name="Feng Y."/>
            <person name="Wang J."/>
            <person name="Zheng F."/>
            <person name="Pan X."/>
            <person name="Liu D."/>
            <person name="Li M."/>
            <person name="Song Y."/>
            <person name="Zhu X."/>
            <person name="Sun H."/>
            <person name="Feng T."/>
            <person name="Guo Z."/>
            <person name="Ju A."/>
            <person name="Ge J."/>
            <person name="Dong Y."/>
            <person name="Sun W."/>
            <person name="Jiang Y."/>
            <person name="Wang J."/>
            <person name="Yan J."/>
            <person name="Yang H."/>
            <person name="Wang X."/>
            <person name="Gao G.F."/>
            <person name="Yang R."/>
            <person name="Wang J."/>
            <person name="Yu J."/>
        </authorList>
    </citation>
    <scope>NUCLEOTIDE SEQUENCE [LARGE SCALE GENOMIC DNA]</scope>
    <source>
        <strain>05ZYH33</strain>
    </source>
</reference>
<keyword id="KW-0687">Ribonucleoprotein</keyword>
<keyword id="KW-0689">Ribosomal protein</keyword>
<keyword id="KW-0694">RNA-binding</keyword>
<keyword id="KW-0699">rRNA-binding</keyword>
<proteinExistence type="inferred from homology"/>
<evidence type="ECO:0000255" key="1">
    <source>
        <dbReference type="HAMAP-Rule" id="MF_01331"/>
    </source>
</evidence>
<evidence type="ECO:0000305" key="2"/>
<comment type="function">
    <text evidence="1">This protein binds specifically to 23S rRNA; its binding is stimulated by other ribosomal proteins, e.g. L4, L17, and L20. It is important during the early stages of 50S assembly. It makes multiple contacts with different domains of the 23S rRNA in the assembled 50S subunit and ribosome (By similarity).</text>
</comment>
<comment type="function">
    <text evidence="1">The globular domain of the protein is located near the polypeptide exit tunnel on the outside of the subunit, while an extended beta-hairpin is found that lines the wall of the exit tunnel in the center of the 70S ribosome.</text>
</comment>
<comment type="subunit">
    <text evidence="1">Part of the 50S ribosomal subunit.</text>
</comment>
<comment type="similarity">
    <text evidence="1">Belongs to the universal ribosomal protein uL22 family.</text>
</comment>
<gene>
    <name evidence="1" type="primary">rplV</name>
    <name type="ordered locus">SSU05_0076</name>
</gene>
<accession>A4VSF9</accession>
<sequence length="114" mass="12108">MAEITSAKATARTVRVSPRKSRLVLDNIRGKSVADAIAILKFTPNKAAGIIEGVLNSAIANAENNFGLEKANLVVSEAFANEGPTLKRFRPRAKGSASPINKRTAHITVVVAEK</sequence>
<feature type="chain" id="PRO_1000052668" description="Large ribosomal subunit protein uL22">
    <location>
        <begin position="1"/>
        <end position="114"/>
    </location>
</feature>